<dbReference type="EC" id="2.7.7.7" evidence="1"/>
<dbReference type="EMBL" id="AL596170">
    <property type="protein sequence ID" value="CAC97312.1"/>
    <property type="molecule type" value="Genomic_DNA"/>
</dbReference>
<dbReference type="PIR" id="AH1692">
    <property type="entry name" value="AH1692"/>
</dbReference>
<dbReference type="RefSeq" id="WP_010991742.1">
    <property type="nucleotide sequence ID" value="NC_003212.1"/>
</dbReference>
<dbReference type="SMR" id="Q92A40"/>
<dbReference type="STRING" id="272626.gene:17566440"/>
<dbReference type="GeneID" id="93235421"/>
<dbReference type="KEGG" id="lin:lin2082"/>
<dbReference type="eggNOG" id="COG0389">
    <property type="taxonomic scope" value="Bacteria"/>
</dbReference>
<dbReference type="HOGENOM" id="CLU_012348_1_2_9"/>
<dbReference type="OrthoDB" id="9808813at2"/>
<dbReference type="Proteomes" id="UP000002513">
    <property type="component" value="Chromosome"/>
</dbReference>
<dbReference type="GO" id="GO:0005829">
    <property type="term" value="C:cytosol"/>
    <property type="evidence" value="ECO:0007669"/>
    <property type="project" value="TreeGrafter"/>
</dbReference>
<dbReference type="GO" id="GO:0003684">
    <property type="term" value="F:damaged DNA binding"/>
    <property type="evidence" value="ECO:0007669"/>
    <property type="project" value="InterPro"/>
</dbReference>
<dbReference type="GO" id="GO:0003887">
    <property type="term" value="F:DNA-directed DNA polymerase activity"/>
    <property type="evidence" value="ECO:0007669"/>
    <property type="project" value="UniProtKB-UniRule"/>
</dbReference>
<dbReference type="GO" id="GO:0000287">
    <property type="term" value="F:magnesium ion binding"/>
    <property type="evidence" value="ECO:0007669"/>
    <property type="project" value="UniProtKB-UniRule"/>
</dbReference>
<dbReference type="GO" id="GO:0006261">
    <property type="term" value="P:DNA-templated DNA replication"/>
    <property type="evidence" value="ECO:0007669"/>
    <property type="project" value="UniProtKB-UniRule"/>
</dbReference>
<dbReference type="GO" id="GO:0042276">
    <property type="term" value="P:error-prone translesion synthesis"/>
    <property type="evidence" value="ECO:0007669"/>
    <property type="project" value="TreeGrafter"/>
</dbReference>
<dbReference type="GO" id="GO:0009432">
    <property type="term" value="P:SOS response"/>
    <property type="evidence" value="ECO:0007669"/>
    <property type="project" value="TreeGrafter"/>
</dbReference>
<dbReference type="CDD" id="cd03586">
    <property type="entry name" value="PolY_Pol_IV_kappa"/>
    <property type="match status" value="1"/>
</dbReference>
<dbReference type="FunFam" id="1.10.150.20:FF:000062">
    <property type="entry name" value="DNA polymerase IV"/>
    <property type="match status" value="1"/>
</dbReference>
<dbReference type="FunFam" id="3.30.1490.100:FF:000004">
    <property type="entry name" value="DNA polymerase IV"/>
    <property type="match status" value="1"/>
</dbReference>
<dbReference type="FunFam" id="3.30.70.270:FF:000002">
    <property type="entry name" value="DNA polymerase IV"/>
    <property type="match status" value="1"/>
</dbReference>
<dbReference type="FunFam" id="3.40.1170.60:FF:000001">
    <property type="entry name" value="DNA polymerase IV"/>
    <property type="match status" value="1"/>
</dbReference>
<dbReference type="Gene3D" id="3.30.70.270">
    <property type="match status" value="1"/>
</dbReference>
<dbReference type="Gene3D" id="3.40.1170.60">
    <property type="match status" value="1"/>
</dbReference>
<dbReference type="Gene3D" id="1.10.150.20">
    <property type="entry name" value="5' to 3' exonuclease, C-terminal subdomain"/>
    <property type="match status" value="1"/>
</dbReference>
<dbReference type="Gene3D" id="3.30.1490.100">
    <property type="entry name" value="DNA polymerase, Y-family, little finger domain"/>
    <property type="match status" value="1"/>
</dbReference>
<dbReference type="HAMAP" id="MF_01113">
    <property type="entry name" value="DNApol_IV"/>
    <property type="match status" value="1"/>
</dbReference>
<dbReference type="InterPro" id="IPR043502">
    <property type="entry name" value="DNA/RNA_pol_sf"/>
</dbReference>
<dbReference type="InterPro" id="IPR036775">
    <property type="entry name" value="DNA_pol_Y-fam_lit_finger_sf"/>
</dbReference>
<dbReference type="InterPro" id="IPR017961">
    <property type="entry name" value="DNA_pol_Y-fam_little_finger"/>
</dbReference>
<dbReference type="InterPro" id="IPR050116">
    <property type="entry name" value="DNA_polymerase-Y"/>
</dbReference>
<dbReference type="InterPro" id="IPR022880">
    <property type="entry name" value="DNApol_IV"/>
</dbReference>
<dbReference type="InterPro" id="IPR024728">
    <property type="entry name" value="PolY_HhH_motif"/>
</dbReference>
<dbReference type="InterPro" id="IPR043128">
    <property type="entry name" value="Rev_trsase/Diguanyl_cyclase"/>
</dbReference>
<dbReference type="InterPro" id="IPR001126">
    <property type="entry name" value="UmuC"/>
</dbReference>
<dbReference type="NCBIfam" id="NF002677">
    <property type="entry name" value="PRK02406.1"/>
    <property type="match status" value="1"/>
</dbReference>
<dbReference type="NCBIfam" id="NF010731">
    <property type="entry name" value="PRK14133.1"/>
    <property type="match status" value="1"/>
</dbReference>
<dbReference type="PANTHER" id="PTHR11076:SF33">
    <property type="entry name" value="DNA POLYMERASE KAPPA"/>
    <property type="match status" value="1"/>
</dbReference>
<dbReference type="PANTHER" id="PTHR11076">
    <property type="entry name" value="DNA REPAIR POLYMERASE UMUC / TRANSFERASE FAMILY MEMBER"/>
    <property type="match status" value="1"/>
</dbReference>
<dbReference type="Pfam" id="PF00817">
    <property type="entry name" value="IMS"/>
    <property type="match status" value="1"/>
</dbReference>
<dbReference type="Pfam" id="PF11799">
    <property type="entry name" value="IMS_C"/>
    <property type="match status" value="1"/>
</dbReference>
<dbReference type="Pfam" id="PF11798">
    <property type="entry name" value="IMS_HHH"/>
    <property type="match status" value="1"/>
</dbReference>
<dbReference type="SUPFAM" id="SSF56672">
    <property type="entry name" value="DNA/RNA polymerases"/>
    <property type="match status" value="1"/>
</dbReference>
<dbReference type="SUPFAM" id="SSF100879">
    <property type="entry name" value="Lesion bypass DNA polymerase (Y-family), little finger domain"/>
    <property type="match status" value="1"/>
</dbReference>
<dbReference type="PROSITE" id="PS50173">
    <property type="entry name" value="UMUC"/>
    <property type="match status" value="1"/>
</dbReference>
<accession>Q92A40</accession>
<reference key="1">
    <citation type="journal article" date="2001" name="Science">
        <title>Comparative genomics of Listeria species.</title>
        <authorList>
            <person name="Glaser P."/>
            <person name="Frangeul L."/>
            <person name="Buchrieser C."/>
            <person name="Rusniok C."/>
            <person name="Amend A."/>
            <person name="Baquero F."/>
            <person name="Berche P."/>
            <person name="Bloecker H."/>
            <person name="Brandt P."/>
            <person name="Chakraborty T."/>
            <person name="Charbit A."/>
            <person name="Chetouani F."/>
            <person name="Couve E."/>
            <person name="de Daruvar A."/>
            <person name="Dehoux P."/>
            <person name="Domann E."/>
            <person name="Dominguez-Bernal G."/>
            <person name="Duchaud E."/>
            <person name="Durant L."/>
            <person name="Dussurget O."/>
            <person name="Entian K.-D."/>
            <person name="Fsihi H."/>
            <person name="Garcia-del Portillo F."/>
            <person name="Garrido P."/>
            <person name="Gautier L."/>
            <person name="Goebel W."/>
            <person name="Gomez-Lopez N."/>
            <person name="Hain T."/>
            <person name="Hauf J."/>
            <person name="Jackson D."/>
            <person name="Jones L.-M."/>
            <person name="Kaerst U."/>
            <person name="Kreft J."/>
            <person name="Kuhn M."/>
            <person name="Kunst F."/>
            <person name="Kurapkat G."/>
            <person name="Madueno E."/>
            <person name="Maitournam A."/>
            <person name="Mata Vicente J."/>
            <person name="Ng E."/>
            <person name="Nedjari H."/>
            <person name="Nordsiek G."/>
            <person name="Novella S."/>
            <person name="de Pablos B."/>
            <person name="Perez-Diaz J.-C."/>
            <person name="Purcell R."/>
            <person name="Remmel B."/>
            <person name="Rose M."/>
            <person name="Schlueter T."/>
            <person name="Simoes N."/>
            <person name="Tierrez A."/>
            <person name="Vazquez-Boland J.-A."/>
            <person name="Voss H."/>
            <person name="Wehland J."/>
            <person name="Cossart P."/>
        </authorList>
    </citation>
    <scope>NUCLEOTIDE SEQUENCE [LARGE SCALE GENOMIC DNA]</scope>
    <source>
        <strain>ATCC BAA-680 / CLIP 11262</strain>
    </source>
</reference>
<name>DPO4_LISIN</name>
<comment type="function">
    <text evidence="1">Poorly processive, error-prone DNA polymerase involved in untargeted mutagenesis. Copies undamaged DNA at stalled replication forks, which arise in vivo from mismatched or misaligned primer ends. These misaligned primers can be extended by PolIV. Exhibits no 3'-5' exonuclease (proofreading) activity. May be involved in translesional synthesis, in conjunction with the beta clamp from PolIII.</text>
</comment>
<comment type="catalytic activity">
    <reaction evidence="1">
        <text>DNA(n) + a 2'-deoxyribonucleoside 5'-triphosphate = DNA(n+1) + diphosphate</text>
        <dbReference type="Rhea" id="RHEA:22508"/>
        <dbReference type="Rhea" id="RHEA-COMP:17339"/>
        <dbReference type="Rhea" id="RHEA-COMP:17340"/>
        <dbReference type="ChEBI" id="CHEBI:33019"/>
        <dbReference type="ChEBI" id="CHEBI:61560"/>
        <dbReference type="ChEBI" id="CHEBI:173112"/>
        <dbReference type="EC" id="2.7.7.7"/>
    </reaction>
</comment>
<comment type="cofactor">
    <cofactor evidence="1">
        <name>Mg(2+)</name>
        <dbReference type="ChEBI" id="CHEBI:18420"/>
    </cofactor>
    <text evidence="1">Binds 2 magnesium ions per subunit.</text>
</comment>
<comment type="subunit">
    <text evidence="1">Monomer.</text>
</comment>
<comment type="subcellular location">
    <subcellularLocation>
        <location evidence="1">Cytoplasm</location>
    </subcellularLocation>
</comment>
<comment type="similarity">
    <text evidence="1">Belongs to the DNA polymerase type-Y family.</text>
</comment>
<protein>
    <recommendedName>
        <fullName evidence="1">DNA polymerase IV</fullName>
        <shortName evidence="1">Pol IV</shortName>
        <ecNumber evidence="1">2.7.7.7</ecNumber>
    </recommendedName>
</protein>
<gene>
    <name evidence="1" type="primary">dinB</name>
    <name type="ordered locus">lin2082</name>
</gene>
<proteinExistence type="inferred from homology"/>
<evidence type="ECO:0000255" key="1">
    <source>
        <dbReference type="HAMAP-Rule" id="MF_01113"/>
    </source>
</evidence>
<organism>
    <name type="scientific">Listeria innocua serovar 6a (strain ATCC BAA-680 / CLIP 11262)</name>
    <dbReference type="NCBI Taxonomy" id="272626"/>
    <lineage>
        <taxon>Bacteria</taxon>
        <taxon>Bacillati</taxon>
        <taxon>Bacillota</taxon>
        <taxon>Bacilli</taxon>
        <taxon>Bacillales</taxon>
        <taxon>Listeriaceae</taxon>
        <taxon>Listeria</taxon>
    </lineage>
</organism>
<keyword id="KW-0963">Cytoplasm</keyword>
<keyword id="KW-0227">DNA damage</keyword>
<keyword id="KW-0234">DNA repair</keyword>
<keyword id="KW-0235">DNA replication</keyword>
<keyword id="KW-0238">DNA-binding</keyword>
<keyword id="KW-0239">DNA-directed DNA polymerase</keyword>
<keyword id="KW-0460">Magnesium</keyword>
<keyword id="KW-0479">Metal-binding</keyword>
<keyword id="KW-0515">Mutator protein</keyword>
<keyword id="KW-0548">Nucleotidyltransferase</keyword>
<keyword id="KW-0808">Transferase</keyword>
<sequence>MDTSRKIIHIDMDAFYASVEQRDHPEFRGKPLIIGGDPNKRGVVATCSYEARKFGVHSAMPTRQAAKLCPNGIFIHGNMAHYVEVSNQIREIFSRYTDIIEPLSLDEAYLDVTENKKGMKSATMVAREIQQTIYRELGLTASAGVSFNKFIAKIASDFKKPAGITVVAPEEAEAFLEQIPVTKFYGVGKVTAEKLHRLGIETGADLKKWSEWDLIRELHKHGYQLYRHVRGRSNNIVNPHRDRKSVGKETTFEFNVLDNRILEQSLMKFAKKVEERLIKLQKHGKTVVLKLRYSDFTTITKRLTLNEYTNDANQIYQAAALLLRESYKGQDSIRLIGLTVTNLKPVYFENLRLEGL</sequence>
<feature type="chain" id="PRO_0000173921" description="DNA polymerase IV">
    <location>
        <begin position="1"/>
        <end position="356"/>
    </location>
</feature>
<feature type="domain" description="UmuC" evidence="1">
    <location>
        <begin position="1"/>
        <end position="188"/>
    </location>
</feature>
<feature type="active site" evidence="1">
    <location>
        <position position="107"/>
    </location>
</feature>
<feature type="binding site" evidence="1">
    <location>
        <position position="11"/>
    </location>
    <ligand>
        <name>Mg(2+)</name>
        <dbReference type="ChEBI" id="CHEBI:18420"/>
    </ligand>
</feature>
<feature type="binding site" evidence="1">
    <location>
        <position position="106"/>
    </location>
    <ligand>
        <name>Mg(2+)</name>
        <dbReference type="ChEBI" id="CHEBI:18420"/>
    </ligand>
</feature>
<feature type="site" description="Substrate discrimination" evidence="1">
    <location>
        <position position="16"/>
    </location>
</feature>